<dbReference type="EMBL" id="CP000822">
    <property type="protein sequence ID" value="ABV12867.1"/>
    <property type="molecule type" value="Genomic_DNA"/>
</dbReference>
<dbReference type="SMR" id="A8AHA4"/>
<dbReference type="STRING" id="290338.CKO_01738"/>
<dbReference type="KEGG" id="cko:CKO_01738"/>
<dbReference type="HOGENOM" id="CLU_013016_0_3_6"/>
<dbReference type="Proteomes" id="UP000008148">
    <property type="component" value="Chromosome"/>
</dbReference>
<dbReference type="GO" id="GO:0005886">
    <property type="term" value="C:plasma membrane"/>
    <property type="evidence" value="ECO:0007669"/>
    <property type="project" value="UniProtKB-SubCell"/>
</dbReference>
<dbReference type="GO" id="GO:0090482">
    <property type="term" value="F:vitamin transmembrane transporter activity"/>
    <property type="evidence" value="ECO:0007669"/>
    <property type="project" value="UniProtKB-UniRule"/>
</dbReference>
<dbReference type="GO" id="GO:0015889">
    <property type="term" value="P:cobalamin transport"/>
    <property type="evidence" value="ECO:0007669"/>
    <property type="project" value="UniProtKB-UniRule"/>
</dbReference>
<dbReference type="CDD" id="cd06550">
    <property type="entry name" value="TM_ABC_iron-siderophores_like"/>
    <property type="match status" value="1"/>
</dbReference>
<dbReference type="FunFam" id="1.10.3470.10:FF:000001">
    <property type="entry name" value="Vitamin B12 ABC transporter permease BtuC"/>
    <property type="match status" value="1"/>
</dbReference>
<dbReference type="Gene3D" id="1.10.3470.10">
    <property type="entry name" value="ABC transporter involved in vitamin B12 uptake, BtuC"/>
    <property type="match status" value="1"/>
</dbReference>
<dbReference type="HAMAP" id="MF_01004">
    <property type="entry name" value="BtuC"/>
    <property type="match status" value="1"/>
</dbReference>
<dbReference type="InterPro" id="IPR037294">
    <property type="entry name" value="ABC_BtuC-like"/>
</dbReference>
<dbReference type="InterPro" id="IPR023691">
    <property type="entry name" value="ABC_transptr_BtuC"/>
</dbReference>
<dbReference type="InterPro" id="IPR000522">
    <property type="entry name" value="ABC_transptr_permease_BtuC"/>
</dbReference>
<dbReference type="NCBIfam" id="NF003001">
    <property type="entry name" value="PRK03784.1"/>
    <property type="match status" value="1"/>
</dbReference>
<dbReference type="PANTHER" id="PTHR30472">
    <property type="entry name" value="FERRIC ENTEROBACTIN TRANSPORT SYSTEM PERMEASE PROTEIN"/>
    <property type="match status" value="1"/>
</dbReference>
<dbReference type="PANTHER" id="PTHR30472:SF29">
    <property type="entry name" value="VITAMIN B12 IMPORT SYSTEM PERMEASE PROTEIN BTUC"/>
    <property type="match status" value="1"/>
</dbReference>
<dbReference type="Pfam" id="PF01032">
    <property type="entry name" value="FecCD"/>
    <property type="match status" value="1"/>
</dbReference>
<dbReference type="SUPFAM" id="SSF81345">
    <property type="entry name" value="ABC transporter involved in vitamin B12 uptake, BtuC"/>
    <property type="match status" value="1"/>
</dbReference>
<sequence length="329" mass="35284">MENMLTFACQQQRRNVRWLSSLSVLMLLAVVLSLCAGDQWIAPGDWFSARGELFVWQIRLPRTLAVLLVGAALALSGAVMQALFENPLAEPGLLGVSNGAGVGLIAAVLLGQGQLPGWALGFCAIAGALIITLILLRFARRHLSTSRLLLAGVALGIICSAMMTWAIYFSTSFDLRQLMYWMMGGFGGVDWQQAWLMIALIPVSLWICCQSQPMNILALGETSARQLGLPLWFWRNLLVVATGWMVGVSVALAGSIGFIGLVIPHILRLCGLSDHRALLPGCALAGAIALLLADVIARLALASAELPIGVVTATMGAPVFIWLLLKSRR</sequence>
<name>BTUC_CITK8</name>
<evidence type="ECO:0000255" key="1">
    <source>
        <dbReference type="HAMAP-Rule" id="MF_01004"/>
    </source>
</evidence>
<protein>
    <recommendedName>
        <fullName evidence="1">Vitamin B12 import system permease protein BtuC</fullName>
    </recommendedName>
</protein>
<comment type="function">
    <text evidence="1">Part of the ABC transporter complex BtuCDF involved in vitamin B12 import. Involved in the translocation of the substrate across the membrane.</text>
</comment>
<comment type="subunit">
    <text evidence="1">The complex is composed of two ATP-binding proteins (BtuD), two transmembrane proteins (BtuC) and a solute-binding protein (BtuF).</text>
</comment>
<comment type="subcellular location">
    <subcellularLocation>
        <location evidence="1">Cell inner membrane</location>
        <topology evidence="1">Multi-pass membrane protein</topology>
    </subcellularLocation>
</comment>
<comment type="similarity">
    <text evidence="1">Belongs to the binding-protein-dependent transport system permease family. FecCD subfamily.</text>
</comment>
<reference key="1">
    <citation type="submission" date="2007-08" db="EMBL/GenBank/DDBJ databases">
        <authorList>
            <consortium name="The Citrobacter koseri Genome Sequencing Project"/>
            <person name="McClelland M."/>
            <person name="Sanderson E.K."/>
            <person name="Porwollik S."/>
            <person name="Spieth J."/>
            <person name="Clifton W.S."/>
            <person name="Latreille P."/>
            <person name="Courtney L."/>
            <person name="Wang C."/>
            <person name="Pepin K."/>
            <person name="Bhonagiri V."/>
            <person name="Nash W."/>
            <person name="Johnson M."/>
            <person name="Thiruvilangam P."/>
            <person name="Wilson R."/>
        </authorList>
    </citation>
    <scope>NUCLEOTIDE SEQUENCE [LARGE SCALE GENOMIC DNA]</scope>
    <source>
        <strain>ATCC BAA-895 / CDC 4225-83 / SGSC4696</strain>
    </source>
</reference>
<organism>
    <name type="scientific">Citrobacter koseri (strain ATCC BAA-895 / CDC 4225-83 / SGSC4696)</name>
    <dbReference type="NCBI Taxonomy" id="290338"/>
    <lineage>
        <taxon>Bacteria</taxon>
        <taxon>Pseudomonadati</taxon>
        <taxon>Pseudomonadota</taxon>
        <taxon>Gammaproteobacteria</taxon>
        <taxon>Enterobacterales</taxon>
        <taxon>Enterobacteriaceae</taxon>
        <taxon>Citrobacter</taxon>
    </lineage>
</organism>
<accession>A8AHA4</accession>
<proteinExistence type="inferred from homology"/>
<keyword id="KW-0997">Cell inner membrane</keyword>
<keyword id="KW-1003">Cell membrane</keyword>
<keyword id="KW-0472">Membrane</keyword>
<keyword id="KW-1185">Reference proteome</keyword>
<keyword id="KW-0812">Transmembrane</keyword>
<keyword id="KW-1133">Transmembrane helix</keyword>
<keyword id="KW-0813">Transport</keyword>
<gene>
    <name evidence="1" type="primary">btuC</name>
    <name type="ordered locus">CKO_01738</name>
</gene>
<feature type="chain" id="PRO_0000318864" description="Vitamin B12 import system permease protein BtuC">
    <location>
        <begin position="1"/>
        <end position="329"/>
    </location>
</feature>
<feature type="transmembrane region" description="Helical" evidence="1">
    <location>
        <begin position="22"/>
        <end position="42"/>
    </location>
</feature>
<feature type="transmembrane region" description="Helical" evidence="1">
    <location>
        <begin position="64"/>
        <end position="84"/>
    </location>
</feature>
<feature type="transmembrane region" description="Helical" evidence="1">
    <location>
        <begin position="91"/>
        <end position="111"/>
    </location>
</feature>
<feature type="transmembrane region" description="Helical" evidence="1">
    <location>
        <begin position="115"/>
        <end position="135"/>
    </location>
</feature>
<feature type="transmembrane region" description="Helical" evidence="1">
    <location>
        <begin position="149"/>
        <end position="169"/>
    </location>
</feature>
<feature type="transmembrane region" description="Helical" evidence="1">
    <location>
        <begin position="187"/>
        <end position="207"/>
    </location>
</feature>
<feature type="transmembrane region" description="Helical" evidence="1">
    <location>
        <begin position="243"/>
        <end position="263"/>
    </location>
</feature>
<feature type="transmembrane region" description="Helical" evidence="1">
    <location>
        <begin position="277"/>
        <end position="297"/>
    </location>
</feature>
<feature type="transmembrane region" description="Helical" evidence="1">
    <location>
        <begin position="305"/>
        <end position="325"/>
    </location>
</feature>